<comment type="function">
    <text evidence="6 7 12">Component of the large ribosomal subunit. The ribosome is a large ribonucleoprotein complex responsible for the synthesis of proteins in the cell.</text>
</comment>
<comment type="subunit">
    <text evidence="1 6 7 12">Component of the large ribosomal subunit (PubMed:23636399, PubMed:32669547). Interacts with CRY1 (By similarity).</text>
</comment>
<comment type="interaction">
    <interactant intactId="EBI-438527">
        <id>P62917</id>
    </interactant>
    <interactant intactId="EBI-358011">
        <id>Q99558</id>
        <label>MAP3K14</label>
    </interactant>
    <organismsDiffer>false</organismsDiffer>
    <experiments>3</experiments>
</comment>
<comment type="subcellular location">
    <subcellularLocation>
        <location evidence="6">Cytoplasm</location>
    </subcellularLocation>
</comment>
<comment type="PTM">
    <text evidence="5">Hydroxylated on His-216 by RIOX1. The modification is impaired by hypoxia.</text>
</comment>
<comment type="miscellaneous">
    <text>This protein can be partially incorporated into E.coli polysomes in vivo, indicating it can replace the endogenous protein.</text>
</comment>
<comment type="similarity">
    <text evidence="11">Belongs to the universal ribosomal protein uL2 family.</text>
</comment>
<name>RL8_HUMAN</name>
<proteinExistence type="evidence at protein level"/>
<evidence type="ECO:0000250" key="1">
    <source>
        <dbReference type="UniProtKB" id="P62918"/>
    </source>
</evidence>
<evidence type="ECO:0000256" key="2">
    <source>
        <dbReference type="SAM" id="MobiDB-lite"/>
    </source>
</evidence>
<evidence type="ECO:0000269" key="3">
    <source>
    </source>
</evidence>
<evidence type="ECO:0000269" key="4">
    <source>
    </source>
</evidence>
<evidence type="ECO:0000269" key="5">
    <source>
    </source>
</evidence>
<evidence type="ECO:0000269" key="6">
    <source>
    </source>
</evidence>
<evidence type="ECO:0000269" key="7">
    <source>
    </source>
</evidence>
<evidence type="ECO:0000269" key="8">
    <source>
    </source>
</evidence>
<evidence type="ECO:0000269" key="9">
    <source ref="3"/>
</evidence>
<evidence type="ECO:0000303" key="10">
    <source>
    </source>
</evidence>
<evidence type="ECO:0000305" key="11"/>
<evidence type="ECO:0000305" key="12">
    <source>
    </source>
</evidence>
<evidence type="ECO:0007744" key="13">
    <source>
        <dbReference type="PDB" id="6LQM"/>
    </source>
</evidence>
<evidence type="ECO:0007744" key="14">
    <source>
        <dbReference type="PDB" id="6LSR"/>
    </source>
</evidence>
<evidence type="ECO:0007744" key="15">
    <source>
        <dbReference type="PDB" id="6LSS"/>
    </source>
</evidence>
<evidence type="ECO:0007744" key="16">
    <source>
        <dbReference type="PDB" id="6LU8"/>
    </source>
</evidence>
<evidence type="ECO:0007744" key="17">
    <source>
    </source>
</evidence>
<gene>
    <name type="primary">RPL8</name>
</gene>
<organism>
    <name type="scientific">Homo sapiens</name>
    <name type="common">Human</name>
    <dbReference type="NCBI Taxonomy" id="9606"/>
    <lineage>
        <taxon>Eukaryota</taxon>
        <taxon>Metazoa</taxon>
        <taxon>Chordata</taxon>
        <taxon>Craniata</taxon>
        <taxon>Vertebrata</taxon>
        <taxon>Euteleostomi</taxon>
        <taxon>Mammalia</taxon>
        <taxon>Eutheria</taxon>
        <taxon>Euarchontoglires</taxon>
        <taxon>Primates</taxon>
        <taxon>Haplorrhini</taxon>
        <taxon>Catarrhini</taxon>
        <taxon>Hominidae</taxon>
        <taxon>Homo</taxon>
    </lineage>
</organism>
<dbReference type="EMBL" id="Z28407">
    <property type="protein sequence ID" value="CAA82248.1"/>
    <property type="molecule type" value="mRNA"/>
</dbReference>
<dbReference type="EMBL" id="AB061821">
    <property type="protein sequence ID" value="BAB79459.1"/>
    <property type="molecule type" value="Genomic_DNA"/>
</dbReference>
<dbReference type="EMBL" id="BT007379">
    <property type="protein sequence ID" value="AAP36043.1"/>
    <property type="molecule type" value="mRNA"/>
</dbReference>
<dbReference type="EMBL" id="CR457046">
    <property type="protein sequence ID" value="CAG33327.1"/>
    <property type="molecule type" value="mRNA"/>
</dbReference>
<dbReference type="EMBL" id="AK289459">
    <property type="protein sequence ID" value="BAF82148.1"/>
    <property type="molecule type" value="mRNA"/>
</dbReference>
<dbReference type="EMBL" id="CH471162">
    <property type="protein sequence ID" value="EAW82048.1"/>
    <property type="molecule type" value="Genomic_DNA"/>
</dbReference>
<dbReference type="EMBL" id="CH471162">
    <property type="protein sequence ID" value="EAW82051.1"/>
    <property type="molecule type" value="Genomic_DNA"/>
</dbReference>
<dbReference type="EMBL" id="CH471162">
    <property type="protein sequence ID" value="EAW82052.1"/>
    <property type="molecule type" value="Genomic_DNA"/>
</dbReference>
<dbReference type="EMBL" id="BC000047">
    <property type="protein sequence ID" value="AAH00047.2"/>
    <property type="molecule type" value="mRNA"/>
</dbReference>
<dbReference type="EMBL" id="BC000077">
    <property type="protein sequence ID" value="AAH00077.1"/>
    <property type="molecule type" value="mRNA"/>
</dbReference>
<dbReference type="EMBL" id="BC012197">
    <property type="protein sequence ID" value="AAH12197.1"/>
    <property type="molecule type" value="mRNA"/>
</dbReference>
<dbReference type="EMBL" id="BC013104">
    <property type="protein sequence ID" value="AAH13104.1"/>
    <property type="molecule type" value="mRNA"/>
</dbReference>
<dbReference type="EMBL" id="BC093064">
    <property type="protein sequence ID" value="AAH93064.1"/>
    <property type="molecule type" value="mRNA"/>
</dbReference>
<dbReference type="EMBL" id="AB007168">
    <property type="protein sequence ID" value="BAA25829.1"/>
    <property type="molecule type" value="Genomic_DNA"/>
</dbReference>
<dbReference type="CCDS" id="CCDS6433.1"/>
<dbReference type="PIR" id="JN0923">
    <property type="entry name" value="JN0923"/>
</dbReference>
<dbReference type="RefSeq" id="NP_000964.1">
    <property type="nucleotide sequence ID" value="NM_000973.5"/>
</dbReference>
<dbReference type="RefSeq" id="NP_001304700.1">
    <property type="nucleotide sequence ID" value="NM_001317771.2"/>
</dbReference>
<dbReference type="RefSeq" id="NP_001304711.1">
    <property type="nucleotide sequence ID" value="NM_001317782.2"/>
</dbReference>
<dbReference type="RefSeq" id="NP_150644.1">
    <property type="nucleotide sequence ID" value="NM_033301.3"/>
</dbReference>
<dbReference type="PDB" id="4CCM">
    <property type="method" value="X-ray"/>
    <property type="resolution" value="2.51 A"/>
    <property type="chains" value="C/D=205-239"/>
</dbReference>
<dbReference type="PDB" id="4CCN">
    <property type="method" value="X-ray"/>
    <property type="resolution" value="2.23 A"/>
    <property type="chains" value="C/D=205-239"/>
</dbReference>
<dbReference type="PDB" id="4CCO">
    <property type="method" value="X-ray"/>
    <property type="resolution" value="2.30 A"/>
    <property type="chains" value="C/D=205-224"/>
</dbReference>
<dbReference type="PDB" id="4UG0">
    <property type="method" value="EM"/>
    <property type="chains" value="LA=1-257"/>
</dbReference>
<dbReference type="PDB" id="4V6X">
    <property type="method" value="EM"/>
    <property type="resolution" value="5.00 A"/>
    <property type="chains" value="CA=1-257"/>
</dbReference>
<dbReference type="PDB" id="4Y3O">
    <property type="method" value="X-ray"/>
    <property type="resolution" value="2.20 A"/>
    <property type="chains" value="C/D=212-222"/>
</dbReference>
<dbReference type="PDB" id="5AJ0">
    <property type="method" value="EM"/>
    <property type="resolution" value="3.50 A"/>
    <property type="chains" value="AA=1-257"/>
</dbReference>
<dbReference type="PDB" id="5LKS">
    <property type="method" value="EM"/>
    <property type="resolution" value="3.60 A"/>
    <property type="chains" value="LA=1-257"/>
</dbReference>
<dbReference type="PDB" id="5T2C">
    <property type="method" value="EM"/>
    <property type="resolution" value="3.60 A"/>
    <property type="chains" value="D=1-257"/>
</dbReference>
<dbReference type="PDB" id="6IP5">
    <property type="method" value="EM"/>
    <property type="resolution" value="3.90 A"/>
    <property type="chains" value="1D=1-257"/>
</dbReference>
<dbReference type="PDB" id="6IP6">
    <property type="method" value="EM"/>
    <property type="resolution" value="4.50 A"/>
    <property type="chains" value="1D=1-257"/>
</dbReference>
<dbReference type="PDB" id="6IP8">
    <property type="method" value="EM"/>
    <property type="resolution" value="3.90 A"/>
    <property type="chains" value="1D=1-257"/>
</dbReference>
<dbReference type="PDB" id="6LQM">
    <property type="method" value="EM"/>
    <property type="resolution" value="3.09 A"/>
    <property type="chains" value="m=1-257"/>
</dbReference>
<dbReference type="PDB" id="6LSR">
    <property type="method" value="EM"/>
    <property type="resolution" value="3.13 A"/>
    <property type="chains" value="m=1-257"/>
</dbReference>
<dbReference type="PDB" id="6LSS">
    <property type="method" value="EM"/>
    <property type="resolution" value="3.23 A"/>
    <property type="chains" value="m=1-257"/>
</dbReference>
<dbReference type="PDB" id="6LU8">
    <property type="method" value="EM"/>
    <property type="resolution" value="3.13 A"/>
    <property type="chains" value="m=1-257"/>
</dbReference>
<dbReference type="PDB" id="6OLE">
    <property type="method" value="EM"/>
    <property type="resolution" value="3.10 A"/>
    <property type="chains" value="A=2-253"/>
</dbReference>
<dbReference type="PDB" id="6OLF">
    <property type="method" value="EM"/>
    <property type="resolution" value="3.90 A"/>
    <property type="chains" value="A=2-253"/>
</dbReference>
<dbReference type="PDB" id="6OLG">
    <property type="method" value="EM"/>
    <property type="resolution" value="3.40 A"/>
    <property type="chains" value="AA=1-257"/>
</dbReference>
<dbReference type="PDB" id="6OLI">
    <property type="method" value="EM"/>
    <property type="resolution" value="3.50 A"/>
    <property type="chains" value="A=2-253"/>
</dbReference>
<dbReference type="PDB" id="6OLZ">
    <property type="method" value="EM"/>
    <property type="resolution" value="3.90 A"/>
    <property type="chains" value="AA=2-249"/>
</dbReference>
<dbReference type="PDB" id="6OM0">
    <property type="method" value="EM"/>
    <property type="resolution" value="3.10 A"/>
    <property type="chains" value="A=2-253"/>
</dbReference>
<dbReference type="PDB" id="6OM7">
    <property type="method" value="EM"/>
    <property type="resolution" value="3.70 A"/>
    <property type="chains" value="A=2-253"/>
</dbReference>
<dbReference type="PDB" id="6QZP">
    <property type="method" value="EM"/>
    <property type="resolution" value="2.90 A"/>
    <property type="chains" value="LA=2-249"/>
</dbReference>
<dbReference type="PDB" id="6W6L">
    <property type="method" value="EM"/>
    <property type="resolution" value="3.84 A"/>
    <property type="chains" value="A=1-257"/>
</dbReference>
<dbReference type="PDB" id="6XA1">
    <property type="method" value="EM"/>
    <property type="resolution" value="2.80 A"/>
    <property type="chains" value="LA=2-249"/>
</dbReference>
<dbReference type="PDB" id="6Y0G">
    <property type="method" value="EM"/>
    <property type="resolution" value="3.20 A"/>
    <property type="chains" value="LA=1-257"/>
</dbReference>
<dbReference type="PDB" id="6Y2L">
    <property type="method" value="EM"/>
    <property type="resolution" value="3.00 A"/>
    <property type="chains" value="LA=1-257"/>
</dbReference>
<dbReference type="PDB" id="6Y57">
    <property type="method" value="EM"/>
    <property type="resolution" value="3.50 A"/>
    <property type="chains" value="LA=1-257"/>
</dbReference>
<dbReference type="PDB" id="6Y6X">
    <property type="method" value="EM"/>
    <property type="resolution" value="2.80 A"/>
    <property type="chains" value="LA=2-249"/>
</dbReference>
<dbReference type="PDB" id="6Z6L">
    <property type="method" value="EM"/>
    <property type="resolution" value="3.00 A"/>
    <property type="chains" value="LA=1-257"/>
</dbReference>
<dbReference type="PDB" id="6Z6M">
    <property type="method" value="EM"/>
    <property type="resolution" value="3.10 A"/>
    <property type="chains" value="LA=1-257"/>
</dbReference>
<dbReference type="PDB" id="6Z6N">
    <property type="method" value="EM"/>
    <property type="resolution" value="2.90 A"/>
    <property type="chains" value="LA=1-257"/>
</dbReference>
<dbReference type="PDB" id="6ZM7">
    <property type="method" value="EM"/>
    <property type="resolution" value="2.70 A"/>
    <property type="chains" value="LA=1-257"/>
</dbReference>
<dbReference type="PDB" id="6ZME">
    <property type="method" value="EM"/>
    <property type="resolution" value="3.00 A"/>
    <property type="chains" value="LA=1-257"/>
</dbReference>
<dbReference type="PDB" id="6ZMI">
    <property type="method" value="EM"/>
    <property type="resolution" value="2.60 A"/>
    <property type="chains" value="LA=1-257"/>
</dbReference>
<dbReference type="PDB" id="6ZMO">
    <property type="method" value="EM"/>
    <property type="resolution" value="3.10 A"/>
    <property type="chains" value="LA=1-257"/>
</dbReference>
<dbReference type="PDB" id="7BHP">
    <property type="method" value="EM"/>
    <property type="resolution" value="3.30 A"/>
    <property type="chains" value="LA=1-257"/>
</dbReference>
<dbReference type="PDB" id="7F5S">
    <property type="method" value="EM"/>
    <property type="resolution" value="2.72 A"/>
    <property type="chains" value="LA=1-257"/>
</dbReference>
<dbReference type="PDB" id="7OW7">
    <property type="method" value="EM"/>
    <property type="resolution" value="2.20 A"/>
    <property type="chains" value="D=1-257"/>
</dbReference>
<dbReference type="PDB" id="7UN3">
    <property type="method" value="EM"/>
    <property type="resolution" value="3.50 A"/>
    <property type="chains" value="A/D=1-257"/>
</dbReference>
<dbReference type="PDB" id="7XNX">
    <property type="method" value="EM"/>
    <property type="resolution" value="2.70 A"/>
    <property type="chains" value="LA=1-257"/>
</dbReference>
<dbReference type="PDB" id="7XNY">
    <property type="method" value="EM"/>
    <property type="resolution" value="2.50 A"/>
    <property type="chains" value="LA=1-257"/>
</dbReference>
<dbReference type="PDB" id="8A3D">
    <property type="method" value="EM"/>
    <property type="resolution" value="1.67 A"/>
    <property type="chains" value="D=1-257"/>
</dbReference>
<dbReference type="PDB" id="8FKZ">
    <property type="method" value="EM"/>
    <property type="resolution" value="3.04 A"/>
    <property type="chains" value="SF=1-257"/>
</dbReference>
<dbReference type="PDB" id="8FL2">
    <property type="method" value="EM"/>
    <property type="resolution" value="2.67 A"/>
    <property type="chains" value="SF=1-257"/>
</dbReference>
<dbReference type="PDB" id="8FL3">
    <property type="method" value="EM"/>
    <property type="resolution" value="2.53 A"/>
    <property type="chains" value="SF=1-257"/>
</dbReference>
<dbReference type="PDB" id="8FL4">
    <property type="method" value="EM"/>
    <property type="resolution" value="2.89 A"/>
    <property type="chains" value="SF=1-257"/>
</dbReference>
<dbReference type="PDB" id="8FL6">
    <property type="method" value="EM"/>
    <property type="resolution" value="2.62 A"/>
    <property type="chains" value="SF=1-257"/>
</dbReference>
<dbReference type="PDB" id="8FL7">
    <property type="method" value="EM"/>
    <property type="resolution" value="2.55 A"/>
    <property type="chains" value="SF=1-257"/>
</dbReference>
<dbReference type="PDB" id="8FL9">
    <property type="method" value="EM"/>
    <property type="resolution" value="2.75 A"/>
    <property type="chains" value="SF=1-257"/>
</dbReference>
<dbReference type="PDB" id="8FLA">
    <property type="method" value="EM"/>
    <property type="resolution" value="2.63 A"/>
    <property type="chains" value="SF=1-257"/>
</dbReference>
<dbReference type="PDB" id="8FLB">
    <property type="method" value="EM"/>
    <property type="resolution" value="2.55 A"/>
    <property type="chains" value="SF=1-257"/>
</dbReference>
<dbReference type="PDB" id="8FLC">
    <property type="method" value="EM"/>
    <property type="resolution" value="2.76 A"/>
    <property type="chains" value="SF=1-257"/>
</dbReference>
<dbReference type="PDB" id="8FLD">
    <property type="method" value="EM"/>
    <property type="resolution" value="2.58 A"/>
    <property type="chains" value="SF=1-257"/>
</dbReference>
<dbReference type="PDB" id="8FLE">
    <property type="method" value="EM"/>
    <property type="resolution" value="2.48 A"/>
    <property type="chains" value="SF=1-257"/>
</dbReference>
<dbReference type="PDB" id="8FLF">
    <property type="method" value="EM"/>
    <property type="resolution" value="2.65 A"/>
    <property type="chains" value="SF=1-257"/>
</dbReference>
<dbReference type="PDB" id="8IDT">
    <property type="method" value="EM"/>
    <property type="resolution" value="2.80 A"/>
    <property type="chains" value="m=1-257"/>
</dbReference>
<dbReference type="PDB" id="8IDY">
    <property type="method" value="EM"/>
    <property type="resolution" value="3.00 A"/>
    <property type="chains" value="m=1-257"/>
</dbReference>
<dbReference type="PDB" id="8IE3">
    <property type="method" value="EM"/>
    <property type="resolution" value="3.30 A"/>
    <property type="chains" value="m=1-257"/>
</dbReference>
<dbReference type="PDB" id="8IFD">
    <property type="method" value="EM"/>
    <property type="resolution" value="2.59 A"/>
    <property type="chains" value="1D=1-257"/>
</dbReference>
<dbReference type="PDB" id="8IFE">
    <property type="method" value="EM"/>
    <property type="resolution" value="2.57 A"/>
    <property type="chains" value="1D=1-257"/>
</dbReference>
<dbReference type="PDB" id="8INE">
    <property type="method" value="EM"/>
    <property type="resolution" value="3.20 A"/>
    <property type="chains" value="m=1-257"/>
</dbReference>
<dbReference type="PDB" id="8INF">
    <property type="method" value="EM"/>
    <property type="resolution" value="3.00 A"/>
    <property type="chains" value="m=1-257"/>
</dbReference>
<dbReference type="PDB" id="8INK">
    <property type="method" value="EM"/>
    <property type="resolution" value="3.20 A"/>
    <property type="chains" value="m=1-257"/>
</dbReference>
<dbReference type="PDB" id="8IPD">
    <property type="method" value="EM"/>
    <property type="resolution" value="3.20 A"/>
    <property type="chains" value="m=1-257"/>
</dbReference>
<dbReference type="PDB" id="8IPX">
    <property type="method" value="EM"/>
    <property type="resolution" value="4.30 A"/>
    <property type="chains" value="m=1-257"/>
</dbReference>
<dbReference type="PDB" id="8IPY">
    <property type="method" value="EM"/>
    <property type="resolution" value="3.20 A"/>
    <property type="chains" value="m=1-257"/>
</dbReference>
<dbReference type="PDB" id="8IR1">
    <property type="method" value="EM"/>
    <property type="resolution" value="3.30 A"/>
    <property type="chains" value="m=1-257"/>
</dbReference>
<dbReference type="PDB" id="8IR3">
    <property type="method" value="EM"/>
    <property type="resolution" value="3.50 A"/>
    <property type="chains" value="m=1-257"/>
</dbReference>
<dbReference type="PDB" id="8JDJ">
    <property type="method" value="EM"/>
    <property type="resolution" value="2.50 A"/>
    <property type="chains" value="G=1-257"/>
</dbReference>
<dbReference type="PDB" id="8JDK">
    <property type="method" value="EM"/>
    <property type="resolution" value="2.26 A"/>
    <property type="chains" value="G=1-257"/>
</dbReference>
<dbReference type="PDB" id="8JDL">
    <property type="method" value="EM"/>
    <property type="resolution" value="2.42 A"/>
    <property type="chains" value="G=1-257"/>
</dbReference>
<dbReference type="PDB" id="8JDM">
    <property type="method" value="EM"/>
    <property type="resolution" value="2.67 A"/>
    <property type="chains" value="G=1-257"/>
</dbReference>
<dbReference type="PDB" id="8K2C">
    <property type="method" value="EM"/>
    <property type="resolution" value="2.40 A"/>
    <property type="chains" value="LA=1-257"/>
</dbReference>
<dbReference type="PDB" id="8OHD">
    <property type="method" value="EM"/>
    <property type="resolution" value="3.10 A"/>
    <property type="chains" value="LA=1-257"/>
</dbReference>
<dbReference type="PDB" id="8OJ0">
    <property type="method" value="EM"/>
    <property type="resolution" value="3.30 A"/>
    <property type="chains" value="LA=1-257"/>
</dbReference>
<dbReference type="PDB" id="8OJ5">
    <property type="method" value="EM"/>
    <property type="resolution" value="2.90 A"/>
    <property type="chains" value="LA=1-257"/>
</dbReference>
<dbReference type="PDB" id="8OJ8">
    <property type="method" value="EM"/>
    <property type="resolution" value="3.30 A"/>
    <property type="chains" value="LA=1-257"/>
</dbReference>
<dbReference type="PDB" id="8QFD">
    <property type="method" value="EM"/>
    <property type="resolution" value="2.20 A"/>
    <property type="chains" value="A=1-257"/>
</dbReference>
<dbReference type="PDB" id="8QOI">
    <property type="method" value="EM"/>
    <property type="resolution" value="1.90 A"/>
    <property type="chains" value="LA=1-257"/>
</dbReference>
<dbReference type="PDB" id="8QYX">
    <property type="method" value="EM"/>
    <property type="resolution" value="1.78 A"/>
    <property type="chains" value="D2=1-257"/>
</dbReference>
<dbReference type="PDB" id="8RL2">
    <property type="method" value="EM"/>
    <property type="resolution" value="2.84 A"/>
    <property type="chains" value="LA=1-257"/>
</dbReference>
<dbReference type="PDB" id="8UKB">
    <property type="method" value="EM"/>
    <property type="resolution" value="3.05 A"/>
    <property type="chains" value="LA=2-249"/>
</dbReference>
<dbReference type="PDB" id="8XSX">
    <property type="method" value="EM"/>
    <property type="resolution" value="2.40 A"/>
    <property type="chains" value="LA=1-257"/>
</dbReference>
<dbReference type="PDB" id="8XSY">
    <property type="method" value="EM"/>
    <property type="resolution" value="3.00 A"/>
    <property type="chains" value="LA=1-257"/>
</dbReference>
<dbReference type="PDB" id="8XSZ">
    <property type="method" value="EM"/>
    <property type="resolution" value="3.20 A"/>
    <property type="chains" value="LA=1-257"/>
</dbReference>
<dbReference type="PDB" id="8Y0W">
    <property type="method" value="EM"/>
    <property type="resolution" value="3.40 A"/>
    <property type="chains" value="LA=1-257"/>
</dbReference>
<dbReference type="PDB" id="8Y0X">
    <property type="method" value="EM"/>
    <property type="resolution" value="3.30 A"/>
    <property type="chains" value="LA=1-257"/>
</dbReference>
<dbReference type="PDB" id="8YOO">
    <property type="method" value="EM"/>
    <property type="resolution" value="2.00 A"/>
    <property type="chains" value="LA=1-257"/>
</dbReference>
<dbReference type="PDB" id="8YOP">
    <property type="method" value="EM"/>
    <property type="resolution" value="2.20 A"/>
    <property type="chains" value="LA=1-257"/>
</dbReference>
<dbReference type="PDB" id="9C3H">
    <property type="method" value="EM"/>
    <property type="resolution" value="2.00 A"/>
    <property type="chains" value="LD=1-257"/>
</dbReference>
<dbReference type="PDB" id="9G8M">
    <property type="method" value="EM"/>
    <property type="resolution" value="3.30 A"/>
    <property type="chains" value="LA=1-257"/>
</dbReference>
<dbReference type="PDB" id="9GMO">
    <property type="method" value="EM"/>
    <property type="resolution" value="2.59 A"/>
    <property type="chains" value="D=1-257"/>
</dbReference>
<dbReference type="PDBsum" id="4CCM"/>
<dbReference type="PDBsum" id="4CCN"/>
<dbReference type="PDBsum" id="4CCO"/>
<dbReference type="PDBsum" id="4UG0"/>
<dbReference type="PDBsum" id="4V6X"/>
<dbReference type="PDBsum" id="4Y3O"/>
<dbReference type="PDBsum" id="5AJ0"/>
<dbReference type="PDBsum" id="5LKS"/>
<dbReference type="PDBsum" id="5T2C"/>
<dbReference type="PDBsum" id="6IP5"/>
<dbReference type="PDBsum" id="6IP6"/>
<dbReference type="PDBsum" id="6IP8"/>
<dbReference type="PDBsum" id="6LQM"/>
<dbReference type="PDBsum" id="6LSR"/>
<dbReference type="PDBsum" id="6LSS"/>
<dbReference type="PDBsum" id="6LU8"/>
<dbReference type="PDBsum" id="6OLE"/>
<dbReference type="PDBsum" id="6OLF"/>
<dbReference type="PDBsum" id="6OLG"/>
<dbReference type="PDBsum" id="6OLI"/>
<dbReference type="PDBsum" id="6OLZ"/>
<dbReference type="PDBsum" id="6OM0"/>
<dbReference type="PDBsum" id="6OM7"/>
<dbReference type="PDBsum" id="6QZP"/>
<dbReference type="PDBsum" id="6W6L"/>
<dbReference type="PDBsum" id="6XA1"/>
<dbReference type="PDBsum" id="6Y0G"/>
<dbReference type="PDBsum" id="6Y2L"/>
<dbReference type="PDBsum" id="6Y57"/>
<dbReference type="PDBsum" id="6Y6X"/>
<dbReference type="PDBsum" id="6Z6L"/>
<dbReference type="PDBsum" id="6Z6M"/>
<dbReference type="PDBsum" id="6Z6N"/>
<dbReference type="PDBsum" id="6ZM7"/>
<dbReference type="PDBsum" id="6ZME"/>
<dbReference type="PDBsum" id="6ZMI"/>
<dbReference type="PDBsum" id="6ZMO"/>
<dbReference type="PDBsum" id="7BHP"/>
<dbReference type="PDBsum" id="7F5S"/>
<dbReference type="PDBsum" id="7OW7"/>
<dbReference type="PDBsum" id="7UN3"/>
<dbReference type="PDBsum" id="7XNX"/>
<dbReference type="PDBsum" id="7XNY"/>
<dbReference type="PDBsum" id="8A3D"/>
<dbReference type="PDBsum" id="8FKZ"/>
<dbReference type="PDBsum" id="8FL2"/>
<dbReference type="PDBsum" id="8FL3"/>
<dbReference type="PDBsum" id="8FL4"/>
<dbReference type="PDBsum" id="8FL6"/>
<dbReference type="PDBsum" id="8FL7"/>
<dbReference type="PDBsum" id="8FL9"/>
<dbReference type="PDBsum" id="8FLA"/>
<dbReference type="PDBsum" id="8FLB"/>
<dbReference type="PDBsum" id="8FLC"/>
<dbReference type="PDBsum" id="8FLD"/>
<dbReference type="PDBsum" id="8FLE"/>
<dbReference type="PDBsum" id="8FLF"/>
<dbReference type="PDBsum" id="8IDT"/>
<dbReference type="PDBsum" id="8IDY"/>
<dbReference type="PDBsum" id="8IE3"/>
<dbReference type="PDBsum" id="8IFD"/>
<dbReference type="PDBsum" id="8IFE"/>
<dbReference type="PDBsum" id="8INE"/>
<dbReference type="PDBsum" id="8INF"/>
<dbReference type="PDBsum" id="8INK"/>
<dbReference type="PDBsum" id="8IPD"/>
<dbReference type="PDBsum" id="8IPX"/>
<dbReference type="PDBsum" id="8IPY"/>
<dbReference type="PDBsum" id="8IR1"/>
<dbReference type="PDBsum" id="8IR3"/>
<dbReference type="PDBsum" id="8JDJ"/>
<dbReference type="PDBsum" id="8JDK"/>
<dbReference type="PDBsum" id="8JDL"/>
<dbReference type="PDBsum" id="8JDM"/>
<dbReference type="PDBsum" id="8K2C"/>
<dbReference type="PDBsum" id="8OHD"/>
<dbReference type="PDBsum" id="8OJ0"/>
<dbReference type="PDBsum" id="8OJ5"/>
<dbReference type="PDBsum" id="8OJ8"/>
<dbReference type="PDBsum" id="8QFD"/>
<dbReference type="PDBsum" id="8QOI"/>
<dbReference type="PDBsum" id="8QYX"/>
<dbReference type="PDBsum" id="8RL2"/>
<dbReference type="PDBsum" id="8UKB"/>
<dbReference type="PDBsum" id="8XSX"/>
<dbReference type="PDBsum" id="8XSY"/>
<dbReference type="PDBsum" id="8XSZ"/>
<dbReference type="PDBsum" id="8Y0W"/>
<dbReference type="PDBsum" id="8Y0X"/>
<dbReference type="PDBsum" id="8YOO"/>
<dbReference type="PDBsum" id="8YOP"/>
<dbReference type="PDBsum" id="9C3H"/>
<dbReference type="PDBsum" id="9G8M"/>
<dbReference type="PDBsum" id="9GMO"/>
<dbReference type="EMDB" id="EMD-0948"/>
<dbReference type="EMDB" id="EMD-0963"/>
<dbReference type="EMDB" id="EMD-0964"/>
<dbReference type="EMDB" id="EMD-0978"/>
<dbReference type="EMDB" id="EMD-10668"/>
<dbReference type="EMDB" id="EMD-10674"/>
<dbReference type="EMDB" id="EMD-10690"/>
<dbReference type="EMDB" id="EMD-10709"/>
<dbReference type="EMDB" id="EMD-11098"/>
<dbReference type="EMDB" id="EMD-11099"/>
<dbReference type="EMDB" id="EMD-11100"/>
<dbReference type="EMDB" id="EMD-11288"/>
<dbReference type="EMDB" id="EMD-11289"/>
<dbReference type="EMDB" id="EMD-11292"/>
<dbReference type="EMDB" id="EMD-11299"/>
<dbReference type="EMDB" id="EMD-12189"/>
<dbReference type="EMDB" id="EMD-13094"/>
<dbReference type="EMDB" id="EMD-15113"/>
<dbReference type="EMDB" id="EMD-16880"/>
<dbReference type="EMDB" id="EMD-16902"/>
<dbReference type="EMDB" id="EMD-16905"/>
<dbReference type="EMDB" id="EMD-16908"/>
<dbReference type="EMDB" id="EMD-18382"/>
<dbReference type="EMDB" id="EMD-18539"/>
<dbReference type="EMDB" id="EMD-18765"/>
<dbReference type="EMDB" id="EMD-19330"/>
<dbReference type="EMDB" id="EMD-29262"/>
<dbReference type="EMDB" id="EMD-29265"/>
<dbReference type="EMDB" id="EMD-29266"/>
<dbReference type="EMDB" id="EMD-29267"/>
<dbReference type="EMDB" id="EMD-29268"/>
<dbReference type="EMDB" id="EMD-29269"/>
<dbReference type="EMDB" id="EMD-29271"/>
<dbReference type="EMDB" id="EMD-29272"/>
<dbReference type="EMDB" id="EMD-29273"/>
<dbReference type="EMDB" id="EMD-29274"/>
<dbReference type="EMDB" id="EMD-29275"/>
<dbReference type="EMDB" id="EMD-29276"/>
<dbReference type="EMDB" id="EMD-29277"/>
<dbReference type="EMDB" id="EMD-29757"/>
<dbReference type="EMDB" id="EMD-29758"/>
<dbReference type="EMDB" id="EMD-29759"/>
<dbReference type="EMDB" id="EMD-29760"/>
<dbReference type="EMDB" id="EMD-29771"/>
<dbReference type="EMDB" id="EMD-31465"/>
<dbReference type="EMDB" id="EMD-33329"/>
<dbReference type="EMDB" id="EMD-33330"/>
<dbReference type="EMDB" id="EMD-35370"/>
<dbReference type="EMDB" id="EMD-35371"/>
<dbReference type="EMDB" id="EMD-35375"/>
<dbReference type="EMDB" id="EMD-35413"/>
<dbReference type="EMDB" id="EMD-35414"/>
<dbReference type="EMDB" id="EMD-35596"/>
<dbReference type="EMDB" id="EMD-35597"/>
<dbReference type="EMDB" id="EMD-35599"/>
<dbReference type="EMDB" id="EMD-35639"/>
<dbReference type="EMDB" id="EMD-35649"/>
<dbReference type="EMDB" id="EMD-35651"/>
<dbReference type="EMDB" id="EMD-35672"/>
<dbReference type="EMDB" id="EMD-35673"/>
<dbReference type="EMDB" id="EMD-36178"/>
<dbReference type="EMDB" id="EMD-36179"/>
<dbReference type="EMDB" id="EMD-36180"/>
<dbReference type="EMDB" id="EMD-36181"/>
<dbReference type="EMDB" id="EMD-36838"/>
<dbReference type="EMDB" id="EMD-38629"/>
<dbReference type="EMDB" id="EMD-38630"/>
<dbReference type="EMDB" id="EMD-38631"/>
<dbReference type="EMDB" id="EMD-3883"/>
<dbReference type="EMDB" id="EMD-39455"/>
<dbReference type="EMDB" id="EMD-39456"/>
<dbReference type="EMDB" id="EMD-4070"/>
<dbReference type="EMDB" id="EMD-42351"/>
<dbReference type="EMDB" id="EMD-45170"/>
<dbReference type="EMDB" id="EMD-51132"/>
<dbReference type="EMDB" id="EMD-51452"/>
<dbReference type="EMDB" id="EMD-9701"/>
<dbReference type="EMDB" id="EMD-9702"/>
<dbReference type="EMDB" id="EMD-9703"/>
<dbReference type="SMR" id="P62917"/>
<dbReference type="BioGRID" id="112052">
    <property type="interactions" value="565"/>
</dbReference>
<dbReference type="ComplexPortal" id="CPX-5183">
    <property type="entry name" value="60S cytosolic large ribosomal subunit"/>
</dbReference>
<dbReference type="ComplexPortal" id="CPX-7664">
    <property type="entry name" value="60S cytosolic large ribosomal subunit, testis-specific variant"/>
</dbReference>
<dbReference type="ComplexPortal" id="CPX-7665">
    <property type="entry name" value="60S cytosolic large ribosomal subunit, striated muscle variant"/>
</dbReference>
<dbReference type="CORUM" id="P62917"/>
<dbReference type="DIP" id="DIP-37967N"/>
<dbReference type="FunCoup" id="P62917">
    <property type="interactions" value="1696"/>
</dbReference>
<dbReference type="IntAct" id="P62917">
    <property type="interactions" value="284"/>
</dbReference>
<dbReference type="MINT" id="P62917"/>
<dbReference type="STRING" id="9606.ENSP00000262584"/>
<dbReference type="DrugBank" id="DB02494">
    <property type="generic name" value="(S)-3-phenyllactic acid"/>
</dbReference>
<dbReference type="DrugBank" id="DB07374">
    <property type="generic name" value="Anisomycin"/>
</dbReference>
<dbReference type="DrugBank" id="DB08437">
    <property type="generic name" value="Puromycin"/>
</dbReference>
<dbReference type="GlyGen" id="P62917">
    <property type="glycosylation" value="1 site, 1 O-linked glycan (1 site)"/>
</dbReference>
<dbReference type="iPTMnet" id="P62917"/>
<dbReference type="MetOSite" id="P62917"/>
<dbReference type="PhosphoSitePlus" id="P62917"/>
<dbReference type="SwissPalm" id="P62917"/>
<dbReference type="BioMuta" id="RPL8"/>
<dbReference type="DMDM" id="51702823"/>
<dbReference type="jPOST" id="P62917"/>
<dbReference type="MassIVE" id="P62917"/>
<dbReference type="PaxDb" id="9606-ENSP00000262584"/>
<dbReference type="PeptideAtlas" id="P62917"/>
<dbReference type="ProteomicsDB" id="57454"/>
<dbReference type="Pumba" id="P62917"/>
<dbReference type="TopDownProteomics" id="P62917"/>
<dbReference type="Antibodypedia" id="14991">
    <property type="antibodies" value="296 antibodies from 32 providers"/>
</dbReference>
<dbReference type="DNASU" id="6132"/>
<dbReference type="Ensembl" id="ENST00000262584.7">
    <property type="protein sequence ID" value="ENSP00000262584.3"/>
    <property type="gene ID" value="ENSG00000161016.18"/>
</dbReference>
<dbReference type="Ensembl" id="ENST00000394920.6">
    <property type="protein sequence ID" value="ENSP00000378378.2"/>
    <property type="gene ID" value="ENSG00000161016.18"/>
</dbReference>
<dbReference type="Ensembl" id="ENST00000528957.6">
    <property type="protein sequence ID" value="ENSP00000433464.2"/>
    <property type="gene ID" value="ENSG00000161016.18"/>
</dbReference>
<dbReference type="GeneID" id="6132"/>
<dbReference type="KEGG" id="hsa:6132"/>
<dbReference type="MANE-Select" id="ENST00000528957.6">
    <property type="protein sequence ID" value="ENSP00000433464.2"/>
    <property type="RefSeq nucleotide sequence ID" value="NM_001317782.2"/>
    <property type="RefSeq protein sequence ID" value="NP_001304711.1"/>
</dbReference>
<dbReference type="UCSC" id="uc003zeb.4">
    <property type="organism name" value="human"/>
</dbReference>
<dbReference type="AGR" id="HGNC:10368"/>
<dbReference type="CTD" id="6132"/>
<dbReference type="DisGeNET" id="6132"/>
<dbReference type="GeneCards" id="RPL8"/>
<dbReference type="HGNC" id="HGNC:10368">
    <property type="gene designation" value="RPL8"/>
</dbReference>
<dbReference type="HPA" id="ENSG00000161016">
    <property type="expression patterns" value="Low tissue specificity"/>
</dbReference>
<dbReference type="MalaCards" id="RPL8"/>
<dbReference type="MIM" id="604177">
    <property type="type" value="gene"/>
</dbReference>
<dbReference type="neXtProt" id="NX_P62917"/>
<dbReference type="OpenTargets" id="ENSG00000161016"/>
<dbReference type="Orphanet" id="124">
    <property type="disease" value="Diamond-Blackfan anemia"/>
</dbReference>
<dbReference type="PharmGKB" id="PA34768"/>
<dbReference type="VEuPathDB" id="HostDB:ENSG00000161016"/>
<dbReference type="eggNOG" id="KOG2309">
    <property type="taxonomic scope" value="Eukaryota"/>
</dbReference>
<dbReference type="GeneTree" id="ENSGT00940000153244"/>
<dbReference type="InParanoid" id="P62917"/>
<dbReference type="OMA" id="GGRHPCT"/>
<dbReference type="OrthoDB" id="10267824at2759"/>
<dbReference type="PAN-GO" id="P62917">
    <property type="GO annotations" value="4 GO annotations based on evolutionary models"/>
</dbReference>
<dbReference type="PhylomeDB" id="P62917"/>
<dbReference type="TreeFam" id="TF300748"/>
<dbReference type="PathwayCommons" id="P62917"/>
<dbReference type="Reactome" id="R-HSA-156827">
    <property type="pathway name" value="L13a-mediated translational silencing of Ceruloplasmin expression"/>
</dbReference>
<dbReference type="Reactome" id="R-HSA-156902">
    <property type="pathway name" value="Peptide chain elongation"/>
</dbReference>
<dbReference type="Reactome" id="R-HSA-1799339">
    <property type="pathway name" value="SRP-dependent cotranslational protein targeting to membrane"/>
</dbReference>
<dbReference type="Reactome" id="R-HSA-192823">
    <property type="pathway name" value="Viral mRNA Translation"/>
</dbReference>
<dbReference type="Reactome" id="R-HSA-2408557">
    <property type="pathway name" value="Selenocysteine synthesis"/>
</dbReference>
<dbReference type="Reactome" id="R-HSA-6791226">
    <property type="pathway name" value="Major pathway of rRNA processing in the nucleolus and cytosol"/>
</dbReference>
<dbReference type="Reactome" id="R-HSA-72689">
    <property type="pathway name" value="Formation of a pool of free 40S subunits"/>
</dbReference>
<dbReference type="Reactome" id="R-HSA-72706">
    <property type="pathway name" value="GTP hydrolysis and joining of the 60S ribosomal subunit"/>
</dbReference>
<dbReference type="Reactome" id="R-HSA-72764">
    <property type="pathway name" value="Eukaryotic Translation Termination"/>
</dbReference>
<dbReference type="Reactome" id="R-HSA-9010553">
    <property type="pathway name" value="Regulation of expression of SLITs and ROBOs"/>
</dbReference>
<dbReference type="Reactome" id="R-HSA-9629569">
    <property type="pathway name" value="Protein hydroxylation"/>
</dbReference>
<dbReference type="Reactome" id="R-HSA-9633012">
    <property type="pathway name" value="Response of EIF2AK4 (GCN2) to amino acid deficiency"/>
</dbReference>
<dbReference type="Reactome" id="R-HSA-975956">
    <property type="pathway name" value="Nonsense Mediated Decay (NMD) independent of the Exon Junction Complex (EJC)"/>
</dbReference>
<dbReference type="Reactome" id="R-HSA-975957">
    <property type="pathway name" value="Nonsense Mediated Decay (NMD) enhanced by the Exon Junction Complex (EJC)"/>
</dbReference>
<dbReference type="SignaLink" id="P62917"/>
<dbReference type="SIGNOR" id="P62917"/>
<dbReference type="BioGRID-ORCS" id="6132">
    <property type="hits" value="868 hits in 1150 CRISPR screens"/>
</dbReference>
<dbReference type="CD-CODE" id="91857CE7">
    <property type="entry name" value="Nucleolus"/>
</dbReference>
<dbReference type="CD-CODE" id="FB4E32DD">
    <property type="entry name" value="Presynaptic clusters and postsynaptic densities"/>
</dbReference>
<dbReference type="ChiTaRS" id="RPL8">
    <property type="organism name" value="human"/>
</dbReference>
<dbReference type="EvolutionaryTrace" id="P62917"/>
<dbReference type="GeneWiki" id="RPL8"/>
<dbReference type="GenomeRNAi" id="6132"/>
<dbReference type="Pharos" id="P62917">
    <property type="development level" value="Tbio"/>
</dbReference>
<dbReference type="PRO" id="PR:P62917"/>
<dbReference type="Proteomes" id="UP000005640">
    <property type="component" value="Chromosome 8"/>
</dbReference>
<dbReference type="RNAct" id="P62917">
    <property type="molecule type" value="protein"/>
</dbReference>
<dbReference type="Bgee" id="ENSG00000161016">
    <property type="expression patterns" value="Expressed in oviduct epithelium and 116 other cell types or tissues"/>
</dbReference>
<dbReference type="ExpressionAtlas" id="P62917">
    <property type="expression patterns" value="baseline and differential"/>
</dbReference>
<dbReference type="GO" id="GO:0005737">
    <property type="term" value="C:cytoplasm"/>
    <property type="evidence" value="ECO:0000303"/>
    <property type="project" value="ComplexPortal"/>
</dbReference>
<dbReference type="GO" id="GO:0005829">
    <property type="term" value="C:cytosol"/>
    <property type="evidence" value="ECO:0000304"/>
    <property type="project" value="Reactome"/>
</dbReference>
<dbReference type="GO" id="GO:0022625">
    <property type="term" value="C:cytosolic large ribosomal subunit"/>
    <property type="evidence" value="ECO:0000314"/>
    <property type="project" value="UniProtKB"/>
</dbReference>
<dbReference type="GO" id="GO:0022626">
    <property type="term" value="C:cytosolic ribosome"/>
    <property type="evidence" value="ECO:0000314"/>
    <property type="project" value="FlyBase"/>
</dbReference>
<dbReference type="GO" id="GO:0005925">
    <property type="term" value="C:focal adhesion"/>
    <property type="evidence" value="ECO:0007005"/>
    <property type="project" value="UniProtKB"/>
</dbReference>
<dbReference type="GO" id="GO:0016020">
    <property type="term" value="C:membrane"/>
    <property type="evidence" value="ECO:0007005"/>
    <property type="project" value="UniProtKB"/>
</dbReference>
<dbReference type="GO" id="GO:0005654">
    <property type="term" value="C:nucleoplasm"/>
    <property type="evidence" value="ECO:0000304"/>
    <property type="project" value="Reactome"/>
</dbReference>
<dbReference type="GO" id="GO:0098794">
    <property type="term" value="C:postsynapse"/>
    <property type="evidence" value="ECO:0000314"/>
    <property type="project" value="SynGO"/>
</dbReference>
<dbReference type="GO" id="GO:0014069">
    <property type="term" value="C:postsynaptic density"/>
    <property type="evidence" value="ECO:0000314"/>
    <property type="project" value="SynGO"/>
</dbReference>
<dbReference type="GO" id="GO:0003723">
    <property type="term" value="F:RNA binding"/>
    <property type="evidence" value="ECO:0007005"/>
    <property type="project" value="UniProtKB"/>
</dbReference>
<dbReference type="GO" id="GO:0019843">
    <property type="term" value="F:rRNA binding"/>
    <property type="evidence" value="ECO:0007669"/>
    <property type="project" value="UniProtKB-KW"/>
</dbReference>
<dbReference type="GO" id="GO:0003735">
    <property type="term" value="F:structural constituent of ribosome"/>
    <property type="evidence" value="ECO:0000314"/>
    <property type="project" value="UniProtKB"/>
</dbReference>
<dbReference type="GO" id="GO:0002181">
    <property type="term" value="P:cytoplasmic translation"/>
    <property type="evidence" value="ECO:0000314"/>
    <property type="project" value="UniProtKB"/>
</dbReference>
<dbReference type="GO" id="GO:0006412">
    <property type="term" value="P:translation"/>
    <property type="evidence" value="ECO:0000304"/>
    <property type="project" value="ProtInc"/>
</dbReference>
<dbReference type="FunFam" id="4.10.950.10:FF:000002">
    <property type="entry name" value="60S ribosomal protein L2"/>
    <property type="match status" value="1"/>
</dbReference>
<dbReference type="FunFam" id="2.30.30.30:FF:000006">
    <property type="entry name" value="60S ribosomal protein L8"/>
    <property type="match status" value="1"/>
</dbReference>
<dbReference type="FunFam" id="2.40.50.140:FF:000581">
    <property type="entry name" value="Ribosomal protein L8"/>
    <property type="match status" value="1"/>
</dbReference>
<dbReference type="Gene3D" id="2.30.30.30">
    <property type="match status" value="1"/>
</dbReference>
<dbReference type="Gene3D" id="2.40.50.140">
    <property type="entry name" value="Nucleic acid-binding proteins"/>
    <property type="match status" value="1"/>
</dbReference>
<dbReference type="Gene3D" id="4.10.950.10">
    <property type="entry name" value="Ribosomal protein L2, domain 3"/>
    <property type="match status" value="1"/>
</dbReference>
<dbReference type="HAMAP" id="MF_01320_A">
    <property type="entry name" value="Ribosomal_uL2_A"/>
    <property type="match status" value="1"/>
</dbReference>
<dbReference type="InterPro" id="IPR012340">
    <property type="entry name" value="NA-bd_OB-fold"/>
</dbReference>
<dbReference type="InterPro" id="IPR014722">
    <property type="entry name" value="Rib_uL2_dom2"/>
</dbReference>
<dbReference type="InterPro" id="IPR002171">
    <property type="entry name" value="Ribosomal_uL2"/>
</dbReference>
<dbReference type="InterPro" id="IPR023672">
    <property type="entry name" value="Ribosomal_uL2_arc_euk"/>
</dbReference>
<dbReference type="InterPro" id="IPR022669">
    <property type="entry name" value="Ribosomal_uL2_C"/>
</dbReference>
<dbReference type="InterPro" id="IPR022671">
    <property type="entry name" value="Ribosomal_uL2_CS"/>
</dbReference>
<dbReference type="InterPro" id="IPR014726">
    <property type="entry name" value="Ribosomal_uL2_dom3"/>
</dbReference>
<dbReference type="InterPro" id="IPR022666">
    <property type="entry name" value="Ribosomal_uL2_RNA-bd_dom"/>
</dbReference>
<dbReference type="InterPro" id="IPR008991">
    <property type="entry name" value="Translation_prot_SH3-like_sf"/>
</dbReference>
<dbReference type="NCBIfam" id="NF007180">
    <property type="entry name" value="PRK09612.1"/>
    <property type="match status" value="1"/>
</dbReference>
<dbReference type="PANTHER" id="PTHR13691:SF16">
    <property type="entry name" value="LARGE RIBOSOMAL SUBUNIT PROTEIN UL2"/>
    <property type="match status" value="1"/>
</dbReference>
<dbReference type="PANTHER" id="PTHR13691">
    <property type="entry name" value="RIBOSOMAL PROTEIN L2"/>
    <property type="match status" value="1"/>
</dbReference>
<dbReference type="Pfam" id="PF00181">
    <property type="entry name" value="Ribosomal_L2"/>
    <property type="match status" value="1"/>
</dbReference>
<dbReference type="Pfam" id="PF03947">
    <property type="entry name" value="Ribosomal_L2_C"/>
    <property type="match status" value="1"/>
</dbReference>
<dbReference type="PIRSF" id="PIRSF002158">
    <property type="entry name" value="Ribosomal_L2"/>
    <property type="match status" value="1"/>
</dbReference>
<dbReference type="SMART" id="SM01383">
    <property type="entry name" value="Ribosomal_L2"/>
    <property type="match status" value="1"/>
</dbReference>
<dbReference type="SMART" id="SM01382">
    <property type="entry name" value="Ribosomal_L2_C"/>
    <property type="match status" value="1"/>
</dbReference>
<dbReference type="SUPFAM" id="SSF50249">
    <property type="entry name" value="Nucleic acid-binding proteins"/>
    <property type="match status" value="1"/>
</dbReference>
<dbReference type="SUPFAM" id="SSF50104">
    <property type="entry name" value="Translation proteins SH3-like domain"/>
    <property type="match status" value="1"/>
</dbReference>
<dbReference type="PROSITE" id="PS00467">
    <property type="entry name" value="RIBOSOMAL_L2"/>
    <property type="match status" value="1"/>
</dbReference>
<feature type="initiator methionine" description="Removed" evidence="3">
    <location>
        <position position="1"/>
    </location>
</feature>
<feature type="chain" id="PRO_0000129743" description="Large ribosomal subunit protein uL2">
    <location>
        <begin position="2"/>
        <end position="257"/>
    </location>
</feature>
<feature type="region of interest" description="Disordered" evidence="2">
    <location>
        <begin position="207"/>
        <end position="232"/>
    </location>
</feature>
<feature type="modified residue" description="(3S)-3-hydroxyhistidine" evidence="5">
    <location>
        <position position="216"/>
    </location>
</feature>
<feature type="cross-link" description="Glycyl lysine isopeptide (Lys-Gly) (interchain with G-Cter in SUMO2)" evidence="17">
    <location>
        <position position="42"/>
    </location>
</feature>
<feature type="cross-link" description="Glycyl lysine isopeptide (Lys-Gly) (interchain with G-Cter in SUMO2)" evidence="17">
    <location>
        <position position="149"/>
    </location>
</feature>
<feature type="cross-link" description="Glycyl lysine isopeptide (Lys-Gly) (interchain with G-Cter in SUMO2)" evidence="17">
    <location>
        <position position="234"/>
    </location>
</feature>
<feature type="cross-link" description="Glycyl lysine isopeptide (Lys-Gly) (interchain with G-Cter in SUMO2)" evidence="17">
    <location>
        <position position="250"/>
    </location>
</feature>
<feature type="sequence variant" id="VAR_019658" description="In dbSNP:rs11539893." evidence="4 9">
    <original>I</original>
    <variation>V</variation>
    <location>
        <position position="98"/>
    </location>
</feature>
<feature type="mutagenesis site" description="No incorporation into translating E.coli polysomes; ribosomes assembled normally. Significantly reduced translational activity." evidence="8">
    <original>H</original>
    <variation>A</variation>
    <variation>G</variation>
    <location>
        <position position="209"/>
    </location>
</feature>
<keyword id="KW-0002">3D-structure</keyword>
<keyword id="KW-0963">Cytoplasm</keyword>
<keyword id="KW-0903">Direct protein sequencing</keyword>
<keyword id="KW-0379">Hydroxylation</keyword>
<keyword id="KW-1017">Isopeptide bond</keyword>
<keyword id="KW-1267">Proteomics identification</keyword>
<keyword id="KW-1185">Reference proteome</keyword>
<keyword id="KW-0687">Ribonucleoprotein</keyword>
<keyword id="KW-0689">Ribosomal protein</keyword>
<keyword id="KW-0694">RNA-binding</keyword>
<keyword id="KW-0699">rRNA-binding</keyword>
<keyword id="KW-0832">Ubl conjugation</keyword>
<protein>
    <recommendedName>
        <fullName evidence="10">Large ribosomal subunit protein uL2</fullName>
    </recommendedName>
    <alternativeName>
        <fullName>60S ribosomal protein L8</fullName>
    </alternativeName>
</protein>
<reference key="1">
    <citation type="journal article" date="1993" name="Biochem. Biophys. Res. Commun.">
        <title>Characterization by cDNA cloning of the mRNA of human ribosomal protein L8.</title>
        <authorList>
            <person name="Hanes J."/>
            <person name="Klaudiny J."/>
            <person name="von der Kammer H."/>
            <person name="Scheit K.H."/>
        </authorList>
    </citation>
    <scope>NUCLEOTIDE SEQUENCE [MRNA]</scope>
    <source>
        <tissue>Ovary</tissue>
    </source>
</reference>
<reference key="2">
    <citation type="journal article" date="2002" name="Genome Res.">
        <title>The human ribosomal protein genes: sequencing and comparative analysis of 73 genes.</title>
        <authorList>
            <person name="Yoshihama M."/>
            <person name="Uechi T."/>
            <person name="Asakawa S."/>
            <person name="Kawasaki K."/>
            <person name="Kato S."/>
            <person name="Higa S."/>
            <person name="Maeda N."/>
            <person name="Minoshima S."/>
            <person name="Tanaka T."/>
            <person name="Shimizu N."/>
            <person name="Kenmochi N."/>
        </authorList>
    </citation>
    <scope>NUCLEOTIDE SEQUENCE [GENOMIC DNA]</scope>
</reference>
<reference key="3">
    <citation type="submission" date="2003-05" db="EMBL/GenBank/DDBJ databases">
        <title>Cloning of human full-length CDSs in BD Creator(TM) system donor vector.</title>
        <authorList>
            <person name="Kalnine N."/>
            <person name="Chen X."/>
            <person name="Rolfs A."/>
            <person name="Halleck A."/>
            <person name="Hines L."/>
            <person name="Eisenstein S."/>
            <person name="Koundinya M."/>
            <person name="Raphael J."/>
            <person name="Moreira D."/>
            <person name="Kelley T."/>
            <person name="LaBaer J."/>
            <person name="Lin Y."/>
            <person name="Phelan M."/>
            <person name="Farmer A."/>
        </authorList>
    </citation>
    <scope>NUCLEOTIDE SEQUENCE [LARGE SCALE MRNA]</scope>
    <scope>VARIANT VAL-98</scope>
</reference>
<reference key="4">
    <citation type="submission" date="2004-06" db="EMBL/GenBank/DDBJ databases">
        <title>Cloning of human full open reading frames in Gateway(TM) system entry vector (pDONR201).</title>
        <authorList>
            <person name="Ebert L."/>
            <person name="Schick M."/>
            <person name="Neubert P."/>
            <person name="Schatten R."/>
            <person name="Henze S."/>
            <person name="Korn B."/>
        </authorList>
    </citation>
    <scope>NUCLEOTIDE SEQUENCE [LARGE SCALE MRNA]</scope>
</reference>
<reference key="5">
    <citation type="journal article" date="2004" name="Nat. Genet.">
        <title>Complete sequencing and characterization of 21,243 full-length human cDNAs.</title>
        <authorList>
            <person name="Ota T."/>
            <person name="Suzuki Y."/>
            <person name="Nishikawa T."/>
            <person name="Otsuki T."/>
            <person name="Sugiyama T."/>
            <person name="Irie R."/>
            <person name="Wakamatsu A."/>
            <person name="Hayashi K."/>
            <person name="Sato H."/>
            <person name="Nagai K."/>
            <person name="Kimura K."/>
            <person name="Makita H."/>
            <person name="Sekine M."/>
            <person name="Obayashi M."/>
            <person name="Nishi T."/>
            <person name="Shibahara T."/>
            <person name="Tanaka T."/>
            <person name="Ishii S."/>
            <person name="Yamamoto J."/>
            <person name="Saito K."/>
            <person name="Kawai Y."/>
            <person name="Isono Y."/>
            <person name="Nakamura Y."/>
            <person name="Nagahari K."/>
            <person name="Murakami K."/>
            <person name="Yasuda T."/>
            <person name="Iwayanagi T."/>
            <person name="Wagatsuma M."/>
            <person name="Shiratori A."/>
            <person name="Sudo H."/>
            <person name="Hosoiri T."/>
            <person name="Kaku Y."/>
            <person name="Kodaira H."/>
            <person name="Kondo H."/>
            <person name="Sugawara M."/>
            <person name="Takahashi M."/>
            <person name="Kanda K."/>
            <person name="Yokoi T."/>
            <person name="Furuya T."/>
            <person name="Kikkawa E."/>
            <person name="Omura Y."/>
            <person name="Abe K."/>
            <person name="Kamihara K."/>
            <person name="Katsuta N."/>
            <person name="Sato K."/>
            <person name="Tanikawa M."/>
            <person name="Yamazaki M."/>
            <person name="Ninomiya K."/>
            <person name="Ishibashi T."/>
            <person name="Yamashita H."/>
            <person name="Murakawa K."/>
            <person name="Fujimori K."/>
            <person name="Tanai H."/>
            <person name="Kimata M."/>
            <person name="Watanabe M."/>
            <person name="Hiraoka S."/>
            <person name="Chiba Y."/>
            <person name="Ishida S."/>
            <person name="Ono Y."/>
            <person name="Takiguchi S."/>
            <person name="Watanabe S."/>
            <person name="Yosida M."/>
            <person name="Hotuta T."/>
            <person name="Kusano J."/>
            <person name="Kanehori K."/>
            <person name="Takahashi-Fujii A."/>
            <person name="Hara H."/>
            <person name="Tanase T.-O."/>
            <person name="Nomura Y."/>
            <person name="Togiya S."/>
            <person name="Komai F."/>
            <person name="Hara R."/>
            <person name="Takeuchi K."/>
            <person name="Arita M."/>
            <person name="Imose N."/>
            <person name="Musashino K."/>
            <person name="Yuuki H."/>
            <person name="Oshima A."/>
            <person name="Sasaki N."/>
            <person name="Aotsuka S."/>
            <person name="Yoshikawa Y."/>
            <person name="Matsunawa H."/>
            <person name="Ichihara T."/>
            <person name="Shiohata N."/>
            <person name="Sano S."/>
            <person name="Moriya S."/>
            <person name="Momiyama H."/>
            <person name="Satoh N."/>
            <person name="Takami S."/>
            <person name="Terashima Y."/>
            <person name="Suzuki O."/>
            <person name="Nakagawa S."/>
            <person name="Senoh A."/>
            <person name="Mizoguchi H."/>
            <person name="Goto Y."/>
            <person name="Shimizu F."/>
            <person name="Wakebe H."/>
            <person name="Hishigaki H."/>
            <person name="Watanabe T."/>
            <person name="Sugiyama A."/>
            <person name="Takemoto M."/>
            <person name="Kawakami B."/>
            <person name="Yamazaki M."/>
            <person name="Watanabe K."/>
            <person name="Kumagai A."/>
            <person name="Itakura S."/>
            <person name="Fukuzumi Y."/>
            <person name="Fujimori Y."/>
            <person name="Komiyama M."/>
            <person name="Tashiro H."/>
            <person name="Tanigami A."/>
            <person name="Fujiwara T."/>
            <person name="Ono T."/>
            <person name="Yamada K."/>
            <person name="Fujii Y."/>
            <person name="Ozaki K."/>
            <person name="Hirao M."/>
            <person name="Ohmori Y."/>
            <person name="Kawabata A."/>
            <person name="Hikiji T."/>
            <person name="Kobatake N."/>
            <person name="Inagaki H."/>
            <person name="Ikema Y."/>
            <person name="Okamoto S."/>
            <person name="Okitani R."/>
            <person name="Kawakami T."/>
            <person name="Noguchi S."/>
            <person name="Itoh T."/>
            <person name="Shigeta K."/>
            <person name="Senba T."/>
            <person name="Matsumura K."/>
            <person name="Nakajima Y."/>
            <person name="Mizuno T."/>
            <person name="Morinaga M."/>
            <person name="Sasaki M."/>
            <person name="Togashi T."/>
            <person name="Oyama M."/>
            <person name="Hata H."/>
            <person name="Watanabe M."/>
            <person name="Komatsu T."/>
            <person name="Mizushima-Sugano J."/>
            <person name="Satoh T."/>
            <person name="Shirai Y."/>
            <person name="Takahashi Y."/>
            <person name="Nakagawa K."/>
            <person name="Okumura K."/>
            <person name="Nagase T."/>
            <person name="Nomura N."/>
            <person name="Kikuchi H."/>
            <person name="Masuho Y."/>
            <person name="Yamashita R."/>
            <person name="Nakai K."/>
            <person name="Yada T."/>
            <person name="Nakamura Y."/>
            <person name="Ohara O."/>
            <person name="Isogai T."/>
            <person name="Sugano S."/>
        </authorList>
    </citation>
    <scope>NUCLEOTIDE SEQUENCE [LARGE SCALE MRNA]</scope>
</reference>
<reference key="6">
    <citation type="submission" date="2005-09" db="EMBL/GenBank/DDBJ databases">
        <authorList>
            <person name="Mural R.J."/>
            <person name="Istrail S."/>
            <person name="Sutton G.G."/>
            <person name="Florea L."/>
            <person name="Halpern A.L."/>
            <person name="Mobarry C.M."/>
            <person name="Lippert R."/>
            <person name="Walenz B."/>
            <person name="Shatkay H."/>
            <person name="Dew I."/>
            <person name="Miller J.R."/>
            <person name="Flanigan M.J."/>
            <person name="Edwards N.J."/>
            <person name="Bolanos R."/>
            <person name="Fasulo D."/>
            <person name="Halldorsson B.V."/>
            <person name="Hannenhalli S."/>
            <person name="Turner R."/>
            <person name="Yooseph S."/>
            <person name="Lu F."/>
            <person name="Nusskern D.R."/>
            <person name="Shue B.C."/>
            <person name="Zheng X.H."/>
            <person name="Zhong F."/>
            <person name="Delcher A.L."/>
            <person name="Huson D.H."/>
            <person name="Kravitz S.A."/>
            <person name="Mouchard L."/>
            <person name="Reinert K."/>
            <person name="Remington K.A."/>
            <person name="Clark A.G."/>
            <person name="Waterman M.S."/>
            <person name="Eichler E.E."/>
            <person name="Adams M.D."/>
            <person name="Hunkapiller M.W."/>
            <person name="Myers E.W."/>
            <person name="Venter J.C."/>
        </authorList>
    </citation>
    <scope>NUCLEOTIDE SEQUENCE [LARGE SCALE GENOMIC DNA]</scope>
</reference>
<reference key="7">
    <citation type="journal article" date="2004" name="Genome Res.">
        <title>The status, quality, and expansion of the NIH full-length cDNA project: the Mammalian Gene Collection (MGC).</title>
        <authorList>
            <consortium name="The MGC Project Team"/>
        </authorList>
    </citation>
    <scope>NUCLEOTIDE SEQUENCE [LARGE SCALE MRNA]</scope>
    <scope>VARIANT VAL-98</scope>
    <source>
        <tissue>Kidney</tissue>
        <tissue>Placenta</tissue>
        <tissue>Skin</tissue>
        <tissue>Spinal cord</tissue>
    </source>
</reference>
<reference key="8">
    <citation type="journal article" date="1998" name="Genome Res.">
        <title>A map of 75 human ribosomal protein genes.</title>
        <authorList>
            <person name="Kenmochi N."/>
            <person name="Kawaguchi T."/>
            <person name="Rozen S."/>
            <person name="Davis E."/>
            <person name="Goodman N."/>
            <person name="Hudson T.J."/>
            <person name="Tanaka T."/>
            <person name="Page D.C."/>
        </authorList>
    </citation>
    <scope>NUCLEOTIDE SEQUENCE [GENOMIC DNA] OF 5-134</scope>
</reference>
<reference key="9">
    <citation type="journal article" date="2003" name="J. Protein Chem.">
        <title>Characterization and analysis of posttranslational modifications of the human large cytoplasmic ribosomal subunit proteins by mass spectrometry and Edman sequencing.</title>
        <authorList>
            <person name="Odintsova T.I."/>
            <person name="Muller E.C."/>
            <person name="Ivanov A.V."/>
            <person name="Egorov T.A."/>
            <person name="Bienert R."/>
            <person name="Vladimirov S.N."/>
            <person name="Kostka S."/>
            <person name="Otto A."/>
            <person name="Wittmann-Liebold B."/>
            <person name="Karpova G.G."/>
        </authorList>
    </citation>
    <scope>PROTEIN SEQUENCE OF 2-11</scope>
    <scope>IDENTIFICATION BY MASS SPECTROMETRY</scope>
    <scope>FUNCTION</scope>
    <scope>SUBUNIT</scope>
</reference>
<reference key="10">
    <citation type="journal article" date="1998" name="Biochem. J.">
        <title>Functional implications of ribosomal protein L2 in protein biosynthesis as shown by in vivo replacement studies.</title>
        <authorList>
            <person name="Uehlein M."/>
            <person name="Wegloehner W."/>
            <person name="Urlaub H."/>
            <person name="Wittmann-Liebold B."/>
        </authorList>
    </citation>
    <scope>PROTEIN REPLACEMENT STUDIES IN E.COLI</scope>
    <scope>MUTAGENESIS</scope>
</reference>
<reference key="11">
    <citation type="journal article" date="2003" name="Nature">
        <title>Proteomic characterization of the human centrosome by protein correlation profiling.</title>
        <authorList>
            <person name="Andersen J.S."/>
            <person name="Wilkinson C.J."/>
            <person name="Mayor T."/>
            <person name="Mortensen P."/>
            <person name="Nigg E.A."/>
            <person name="Mann M."/>
        </authorList>
    </citation>
    <scope>IDENTIFICATION BY MASS SPECTROMETRY</scope>
    <source>
        <tissue>Lymphoblast</tissue>
    </source>
</reference>
<reference key="12">
    <citation type="journal article" date="2005" name="Nat. Biotechnol.">
        <title>Immunoaffinity profiling of tyrosine phosphorylation in cancer cells.</title>
        <authorList>
            <person name="Rush J."/>
            <person name="Moritz A."/>
            <person name="Lee K.A."/>
            <person name="Guo A."/>
            <person name="Goss V.L."/>
            <person name="Spek E.J."/>
            <person name="Zhang H."/>
            <person name="Zha X.-M."/>
            <person name="Polakiewicz R.D."/>
            <person name="Comb M.J."/>
        </authorList>
    </citation>
    <scope>IDENTIFICATION BY MASS SPECTROMETRY [LARGE SCALE ANALYSIS]</scope>
</reference>
<reference key="13">
    <citation type="journal article" date="2011" name="BMC Syst. Biol.">
        <title>Initial characterization of the human central proteome.</title>
        <authorList>
            <person name="Burkard T.R."/>
            <person name="Planyavsky M."/>
            <person name="Kaupe I."/>
            <person name="Breitwieser F.P."/>
            <person name="Buerckstuemmer T."/>
            <person name="Bennett K.L."/>
            <person name="Superti-Furga G."/>
            <person name="Colinge J."/>
        </authorList>
    </citation>
    <scope>IDENTIFICATION BY MASS SPECTROMETRY [LARGE SCALE ANALYSIS]</scope>
</reference>
<reference key="14">
    <citation type="journal article" date="2012" name="Nat. Chem. Biol.">
        <title>Oxygenase-catalyzed ribosome hydroxylation occurs in prokaryotes and humans.</title>
        <authorList>
            <person name="Ge W."/>
            <person name="Wolf A."/>
            <person name="Feng T."/>
            <person name="Ho C.H."/>
            <person name="Sekirnik R."/>
            <person name="Zayer A."/>
            <person name="Granatino N."/>
            <person name="Cockman M.E."/>
            <person name="Loenarz C."/>
            <person name="Loik N.D."/>
            <person name="Hardy A.P."/>
            <person name="Claridge T.D."/>
            <person name="Hamed R.B."/>
            <person name="Chowdhury R."/>
            <person name="Gong L."/>
            <person name="Robinson C.V."/>
            <person name="Trudgian D.C."/>
            <person name="Jiang M."/>
            <person name="Mackeen M.M."/>
            <person name="McCullagh J.S."/>
            <person name="Gordiyenko Y."/>
            <person name="Thalhammer A."/>
            <person name="Yamamoto A."/>
            <person name="Yang M."/>
            <person name="Liu-Yi P."/>
            <person name="Zhang Z."/>
            <person name="Schmidt-Zachmann M."/>
            <person name="Kessler B.M."/>
            <person name="Ratcliffe P.J."/>
            <person name="Preston G.M."/>
            <person name="Coleman M.L."/>
            <person name="Schofield C.J."/>
        </authorList>
    </citation>
    <scope>HYDROXYLATION AT HIS-216 BY RIOX1</scope>
</reference>
<reference key="15">
    <citation type="journal article" date="2014" name="Curr. Opin. Struct. Biol.">
        <title>A new system for naming ribosomal proteins.</title>
        <authorList>
            <person name="Ban N."/>
            <person name="Beckmann R."/>
            <person name="Cate J.H.D."/>
            <person name="Dinman J.D."/>
            <person name="Dragon F."/>
            <person name="Ellis S.R."/>
            <person name="Lafontaine D.L.J."/>
            <person name="Lindahl L."/>
            <person name="Liljas A."/>
            <person name="Lipton J.M."/>
            <person name="McAlear M.A."/>
            <person name="Moore P.B."/>
            <person name="Noller H.F."/>
            <person name="Ortega J."/>
            <person name="Panse V.G."/>
            <person name="Ramakrishnan V."/>
            <person name="Spahn C.M.T."/>
            <person name="Steitz T.A."/>
            <person name="Tchorzewski M."/>
            <person name="Tollervey D."/>
            <person name="Warren A.J."/>
            <person name="Williamson J.R."/>
            <person name="Wilson D."/>
            <person name="Yonath A."/>
            <person name="Yusupov M."/>
        </authorList>
    </citation>
    <scope>NOMENCLATURE</scope>
</reference>
<reference key="16">
    <citation type="journal article" date="2014" name="J. Proteomics">
        <title>An enzyme assisted RP-RPLC approach for in-depth analysis of human liver phosphoproteome.</title>
        <authorList>
            <person name="Bian Y."/>
            <person name="Song C."/>
            <person name="Cheng K."/>
            <person name="Dong M."/>
            <person name="Wang F."/>
            <person name="Huang J."/>
            <person name="Sun D."/>
            <person name="Wang L."/>
            <person name="Ye M."/>
            <person name="Zou H."/>
        </authorList>
    </citation>
    <scope>IDENTIFICATION BY MASS SPECTROMETRY [LARGE SCALE ANALYSIS]</scope>
    <source>
        <tissue>Liver</tissue>
    </source>
</reference>
<reference key="17">
    <citation type="journal article" date="2015" name="Proteomics">
        <title>N-terminome analysis of the human mitochondrial proteome.</title>
        <authorList>
            <person name="Vaca Jacome A.S."/>
            <person name="Rabilloud T."/>
            <person name="Schaeffer-Reiss C."/>
            <person name="Rompais M."/>
            <person name="Ayoub D."/>
            <person name="Lane L."/>
            <person name="Bairoch A."/>
            <person name="Van Dorsselaer A."/>
            <person name="Carapito C."/>
        </authorList>
    </citation>
    <scope>IDENTIFICATION BY MASS SPECTROMETRY [LARGE SCALE ANALYSIS]</scope>
</reference>
<reference key="18">
    <citation type="journal article" date="2017" name="Nat. Struct. Mol. Biol.">
        <title>Site-specific mapping of the human SUMO proteome reveals co-modification with phosphorylation.</title>
        <authorList>
            <person name="Hendriks I.A."/>
            <person name="Lyon D."/>
            <person name="Young C."/>
            <person name="Jensen L.J."/>
            <person name="Vertegaal A.C."/>
            <person name="Nielsen M.L."/>
        </authorList>
    </citation>
    <scope>SUMOYLATION [LARGE SCALE ANALYSIS] AT LYS-42; LYS-149; LYS-234 AND LYS-250</scope>
    <scope>IDENTIFICATION BY MASS SPECTROMETRY [LARGE SCALE ANALYSIS]</scope>
</reference>
<reference key="19">
    <citation type="journal article" date="2013" name="Nature">
        <title>Structures of the human and Drosophila 80S ribosome.</title>
        <authorList>
            <person name="Anger A.M."/>
            <person name="Armache J.P."/>
            <person name="Berninghausen O."/>
            <person name="Habeck M."/>
            <person name="Subklewe M."/>
            <person name="Wilson D.N."/>
            <person name="Beckmann R."/>
        </authorList>
    </citation>
    <scope>STRUCTURE BY ELECTRON MICROSCOPY (5.0 ANGSTROMS)</scope>
    <scope>FUNCTION</scope>
    <scope>SUBUNIT</scope>
    <scope>SUBCELLULAR LOCATION</scope>
</reference>
<reference evidence="13 14 15 16" key="20">
    <citation type="journal article" date="2020" name="Nat. Commun.">
        <title>Structural snapshots of human pre-60S ribosomal particles before and after nuclear export.</title>
        <authorList>
            <person name="Liang X."/>
            <person name="Zuo M.Q."/>
            <person name="Zhang Y."/>
            <person name="Li N."/>
            <person name="Ma C."/>
            <person name="Dong M.Q."/>
            <person name="Gao N."/>
        </authorList>
    </citation>
    <scope>STRUCTURE BY ELECTRON MICROSCOPY (3.09 ANGSTROMS)</scope>
    <scope>FUNCTION</scope>
    <scope>SUBUNIT</scope>
</reference>
<sequence>MGRVIRGQRKGAGSVFRAHVKHRKGAARLRAVDFAERHGYIKGIVKDIIHDPGRGAPLAKVVFRDPYRFKKRTELFIAAEGIHTGQFVYCGKKAQLNIGNVLPVGTMPEGTIVCCLEEKPGDRGKLARASGNYATVISHNPETKKTRVKLPSGSKKVISSANRAVVGVVAGGGRIDKPILKAGRAYHKYKAKRNCWPRVRGVAMNPVEHPFGGGNHQHIGKPSTIRRDAPAGRKVGLIAARRTGRLRGTKTVQEKEN</sequence>
<accession>P62917</accession>
<accession>A8K094</accession>
<accession>D3DWN2</accession>
<accession>P25120</accession>
<accession>Q567Q7</accession>
<accession>Q969V7</accession>
<accession>Q9BWQ9</accession>